<comment type="function">
    <text evidence="1">Channel that opens in response to stretch forces in the membrane lipid bilayer. May participate in the regulation of osmotic pressure changes within the cell.</text>
</comment>
<comment type="subunit">
    <text evidence="1">Homopentamer.</text>
</comment>
<comment type="subcellular location">
    <subcellularLocation>
        <location evidence="1">Cell inner membrane</location>
        <topology evidence="1">Multi-pass membrane protein</topology>
    </subcellularLocation>
</comment>
<comment type="similarity">
    <text evidence="1">Belongs to the MscL family.</text>
</comment>
<name>MSCL_PSEAB</name>
<gene>
    <name evidence="1" type="primary">mscL</name>
    <name type="ordered locus">PA14_61050</name>
</gene>
<sequence length="137" mass="14446">MGLLSEFKAFAVKGNVVDMAVGIIIGAAFGKIVSSFVGDVIMPPIGLLIGGVDFSDLAITLKAAEGDVPAVVLAYGKFIQTILDFVIVAFAIFMGVKAINRLKREEAVAPSEPPVPSAEETLLTEIRDLLKAQQNKS</sequence>
<proteinExistence type="inferred from homology"/>
<dbReference type="EMBL" id="CP000438">
    <property type="protein sequence ID" value="ABJ13992.1"/>
    <property type="molecule type" value="Genomic_DNA"/>
</dbReference>
<dbReference type="RefSeq" id="WP_003094890.1">
    <property type="nucleotide sequence ID" value="NZ_CP034244.1"/>
</dbReference>
<dbReference type="SMR" id="Q02G63"/>
<dbReference type="KEGG" id="pau:PA14_61050"/>
<dbReference type="PseudoCAP" id="PA14_61050"/>
<dbReference type="HOGENOM" id="CLU_095787_0_0_6"/>
<dbReference type="BioCyc" id="PAER208963:G1G74-5161-MONOMER"/>
<dbReference type="Proteomes" id="UP000000653">
    <property type="component" value="Chromosome"/>
</dbReference>
<dbReference type="GO" id="GO:0005886">
    <property type="term" value="C:plasma membrane"/>
    <property type="evidence" value="ECO:0007669"/>
    <property type="project" value="UniProtKB-SubCell"/>
</dbReference>
<dbReference type="GO" id="GO:0008381">
    <property type="term" value="F:mechanosensitive monoatomic ion channel activity"/>
    <property type="evidence" value="ECO:0007669"/>
    <property type="project" value="UniProtKB-UniRule"/>
</dbReference>
<dbReference type="FunFam" id="1.10.1200.120:FF:000001">
    <property type="entry name" value="Large-conductance mechanosensitive channel"/>
    <property type="match status" value="1"/>
</dbReference>
<dbReference type="Gene3D" id="1.10.1200.120">
    <property type="entry name" value="Large-conductance mechanosensitive channel, MscL, domain 1"/>
    <property type="match status" value="1"/>
</dbReference>
<dbReference type="HAMAP" id="MF_00115">
    <property type="entry name" value="MscL"/>
    <property type="match status" value="1"/>
</dbReference>
<dbReference type="InterPro" id="IPR019823">
    <property type="entry name" value="Mechanosensitive_channel_CS"/>
</dbReference>
<dbReference type="InterPro" id="IPR001185">
    <property type="entry name" value="MS_channel"/>
</dbReference>
<dbReference type="InterPro" id="IPR037673">
    <property type="entry name" value="MSC/AndL"/>
</dbReference>
<dbReference type="InterPro" id="IPR036019">
    <property type="entry name" value="MscL_channel"/>
</dbReference>
<dbReference type="NCBIfam" id="TIGR00220">
    <property type="entry name" value="mscL"/>
    <property type="match status" value="1"/>
</dbReference>
<dbReference type="NCBIfam" id="NF001843">
    <property type="entry name" value="PRK00567.1-4"/>
    <property type="match status" value="1"/>
</dbReference>
<dbReference type="PANTHER" id="PTHR30266:SF2">
    <property type="entry name" value="LARGE-CONDUCTANCE MECHANOSENSITIVE CHANNEL"/>
    <property type="match status" value="1"/>
</dbReference>
<dbReference type="PANTHER" id="PTHR30266">
    <property type="entry name" value="MECHANOSENSITIVE CHANNEL MSCL"/>
    <property type="match status" value="1"/>
</dbReference>
<dbReference type="Pfam" id="PF01741">
    <property type="entry name" value="MscL"/>
    <property type="match status" value="1"/>
</dbReference>
<dbReference type="PRINTS" id="PR01264">
    <property type="entry name" value="MECHCHANNEL"/>
</dbReference>
<dbReference type="SUPFAM" id="SSF81330">
    <property type="entry name" value="Gated mechanosensitive channel"/>
    <property type="match status" value="1"/>
</dbReference>
<dbReference type="PROSITE" id="PS01327">
    <property type="entry name" value="MSCL"/>
    <property type="match status" value="1"/>
</dbReference>
<feature type="chain" id="PRO_1000015409" description="Large-conductance mechanosensitive channel">
    <location>
        <begin position="1"/>
        <end position="137"/>
    </location>
</feature>
<feature type="transmembrane region" description="Helical" evidence="1">
    <location>
        <begin position="9"/>
        <end position="29"/>
    </location>
</feature>
<feature type="transmembrane region" description="Helical" evidence="1">
    <location>
        <begin position="79"/>
        <end position="99"/>
    </location>
</feature>
<reference key="1">
    <citation type="journal article" date="2006" name="Genome Biol.">
        <title>Genomic analysis reveals that Pseudomonas aeruginosa virulence is combinatorial.</title>
        <authorList>
            <person name="Lee D.G."/>
            <person name="Urbach J.M."/>
            <person name="Wu G."/>
            <person name="Liberati N.T."/>
            <person name="Feinbaum R.L."/>
            <person name="Miyata S."/>
            <person name="Diggins L.T."/>
            <person name="He J."/>
            <person name="Saucier M."/>
            <person name="Deziel E."/>
            <person name="Friedman L."/>
            <person name="Li L."/>
            <person name="Grills G."/>
            <person name="Montgomery K."/>
            <person name="Kucherlapati R."/>
            <person name="Rahme L.G."/>
            <person name="Ausubel F.M."/>
        </authorList>
    </citation>
    <scope>NUCLEOTIDE SEQUENCE [LARGE SCALE GENOMIC DNA]</scope>
    <source>
        <strain>UCBPP-PA14</strain>
    </source>
</reference>
<protein>
    <recommendedName>
        <fullName evidence="1">Large-conductance mechanosensitive channel</fullName>
    </recommendedName>
</protein>
<evidence type="ECO:0000255" key="1">
    <source>
        <dbReference type="HAMAP-Rule" id="MF_00115"/>
    </source>
</evidence>
<accession>Q02G63</accession>
<keyword id="KW-0997">Cell inner membrane</keyword>
<keyword id="KW-1003">Cell membrane</keyword>
<keyword id="KW-0407">Ion channel</keyword>
<keyword id="KW-0406">Ion transport</keyword>
<keyword id="KW-0472">Membrane</keyword>
<keyword id="KW-0812">Transmembrane</keyword>
<keyword id="KW-1133">Transmembrane helix</keyword>
<keyword id="KW-0813">Transport</keyword>
<organism>
    <name type="scientific">Pseudomonas aeruginosa (strain UCBPP-PA14)</name>
    <dbReference type="NCBI Taxonomy" id="208963"/>
    <lineage>
        <taxon>Bacteria</taxon>
        <taxon>Pseudomonadati</taxon>
        <taxon>Pseudomonadota</taxon>
        <taxon>Gammaproteobacteria</taxon>
        <taxon>Pseudomonadales</taxon>
        <taxon>Pseudomonadaceae</taxon>
        <taxon>Pseudomonas</taxon>
    </lineage>
</organism>